<evidence type="ECO:0000255" key="1">
    <source>
        <dbReference type="HAMAP-Rule" id="MF_01020"/>
    </source>
</evidence>
<keyword id="KW-0028">Amino-acid biosynthesis</keyword>
<keyword id="KW-0067">ATP-binding</keyword>
<keyword id="KW-0963">Cytoplasm</keyword>
<keyword id="KW-0368">Histidine biosynthesis</keyword>
<keyword id="KW-0378">Hydrolase</keyword>
<keyword id="KW-0547">Nucleotide-binding</keyword>
<keyword id="KW-1185">Reference proteome</keyword>
<protein>
    <recommendedName>
        <fullName evidence="1">Phosphoribosyl-ATP pyrophosphatase</fullName>
        <shortName evidence="1">PRA-PH</shortName>
        <ecNumber evidence="1">3.6.1.31</ecNumber>
    </recommendedName>
</protein>
<sequence>MNNTLERLATLLEERKNADPQHSYVAHLYQAGQDKILKKLGEEAIETILAAKSRESDAIIYETADLWFHSLVMLAESGLRPEQVLSELERRFGLSGLEEKANRG</sequence>
<organism>
    <name type="scientific">Nitrosococcus oceani (strain ATCC 19707 / BCRC 17464 / JCM 30415 / NCIMB 11848 / C-107)</name>
    <dbReference type="NCBI Taxonomy" id="323261"/>
    <lineage>
        <taxon>Bacteria</taxon>
        <taxon>Pseudomonadati</taxon>
        <taxon>Pseudomonadota</taxon>
        <taxon>Gammaproteobacteria</taxon>
        <taxon>Chromatiales</taxon>
        <taxon>Chromatiaceae</taxon>
        <taxon>Nitrosococcus</taxon>
    </lineage>
</organism>
<dbReference type="EC" id="3.6.1.31" evidence="1"/>
<dbReference type="EMBL" id="CP000127">
    <property type="protein sequence ID" value="ABA59497.1"/>
    <property type="molecule type" value="Genomic_DNA"/>
</dbReference>
<dbReference type="RefSeq" id="WP_011331138.1">
    <property type="nucleotide sequence ID" value="NC_007484.1"/>
</dbReference>
<dbReference type="SMR" id="Q3J6P9"/>
<dbReference type="STRING" id="323261.Noc_3056"/>
<dbReference type="KEGG" id="noc:Noc_3056"/>
<dbReference type="eggNOG" id="COG0140">
    <property type="taxonomic scope" value="Bacteria"/>
</dbReference>
<dbReference type="HOGENOM" id="CLU_123337_1_2_6"/>
<dbReference type="InParanoid" id="Q3J6P9"/>
<dbReference type="UniPathway" id="UPA00031">
    <property type="reaction ID" value="UER00007"/>
</dbReference>
<dbReference type="Proteomes" id="UP000006838">
    <property type="component" value="Chromosome"/>
</dbReference>
<dbReference type="GO" id="GO:0005737">
    <property type="term" value="C:cytoplasm"/>
    <property type="evidence" value="ECO:0007669"/>
    <property type="project" value="UniProtKB-SubCell"/>
</dbReference>
<dbReference type="GO" id="GO:0005524">
    <property type="term" value="F:ATP binding"/>
    <property type="evidence" value="ECO:0007669"/>
    <property type="project" value="UniProtKB-KW"/>
</dbReference>
<dbReference type="GO" id="GO:0004636">
    <property type="term" value="F:phosphoribosyl-ATP diphosphatase activity"/>
    <property type="evidence" value="ECO:0007669"/>
    <property type="project" value="UniProtKB-UniRule"/>
</dbReference>
<dbReference type="GO" id="GO:0000105">
    <property type="term" value="P:L-histidine biosynthetic process"/>
    <property type="evidence" value="ECO:0007669"/>
    <property type="project" value="UniProtKB-UniRule"/>
</dbReference>
<dbReference type="CDD" id="cd11534">
    <property type="entry name" value="NTP-PPase_HisIE_like"/>
    <property type="match status" value="1"/>
</dbReference>
<dbReference type="Gene3D" id="1.10.287.1080">
    <property type="entry name" value="MazG-like"/>
    <property type="match status" value="1"/>
</dbReference>
<dbReference type="HAMAP" id="MF_01020">
    <property type="entry name" value="HisE"/>
    <property type="match status" value="1"/>
</dbReference>
<dbReference type="InterPro" id="IPR008179">
    <property type="entry name" value="HisE"/>
</dbReference>
<dbReference type="InterPro" id="IPR021130">
    <property type="entry name" value="PRib-ATP_PPHydrolase-like"/>
</dbReference>
<dbReference type="NCBIfam" id="TIGR03188">
    <property type="entry name" value="histidine_hisI"/>
    <property type="match status" value="1"/>
</dbReference>
<dbReference type="NCBIfam" id="NF001611">
    <property type="entry name" value="PRK00400.1-3"/>
    <property type="match status" value="1"/>
</dbReference>
<dbReference type="PANTHER" id="PTHR42945">
    <property type="entry name" value="HISTIDINE BIOSYNTHESIS BIFUNCTIONAL PROTEIN"/>
    <property type="match status" value="1"/>
</dbReference>
<dbReference type="PANTHER" id="PTHR42945:SF9">
    <property type="entry name" value="HISTIDINE BIOSYNTHESIS BIFUNCTIONAL PROTEIN HISIE"/>
    <property type="match status" value="1"/>
</dbReference>
<dbReference type="Pfam" id="PF01503">
    <property type="entry name" value="PRA-PH"/>
    <property type="match status" value="1"/>
</dbReference>
<dbReference type="SUPFAM" id="SSF101386">
    <property type="entry name" value="all-alpha NTP pyrophosphatases"/>
    <property type="match status" value="1"/>
</dbReference>
<comment type="catalytic activity">
    <reaction evidence="1">
        <text>1-(5-phospho-beta-D-ribosyl)-ATP + H2O = 1-(5-phospho-beta-D-ribosyl)-5'-AMP + diphosphate + H(+)</text>
        <dbReference type="Rhea" id="RHEA:22828"/>
        <dbReference type="ChEBI" id="CHEBI:15377"/>
        <dbReference type="ChEBI" id="CHEBI:15378"/>
        <dbReference type="ChEBI" id="CHEBI:33019"/>
        <dbReference type="ChEBI" id="CHEBI:59457"/>
        <dbReference type="ChEBI" id="CHEBI:73183"/>
        <dbReference type="EC" id="3.6.1.31"/>
    </reaction>
</comment>
<comment type="pathway">
    <text evidence="1">Amino-acid biosynthesis; L-histidine biosynthesis; L-histidine from 5-phospho-alpha-D-ribose 1-diphosphate: step 2/9.</text>
</comment>
<comment type="subcellular location">
    <subcellularLocation>
        <location evidence="1">Cytoplasm</location>
    </subcellularLocation>
</comment>
<comment type="similarity">
    <text evidence="1">Belongs to the PRA-PH family.</text>
</comment>
<gene>
    <name evidence="1" type="primary">hisE</name>
    <name type="ordered locus">Noc_3056</name>
</gene>
<name>HIS2_NITOC</name>
<feature type="chain" id="PRO_0000230181" description="Phosphoribosyl-ATP pyrophosphatase">
    <location>
        <begin position="1"/>
        <end position="104"/>
    </location>
</feature>
<reference key="1">
    <citation type="journal article" date="2006" name="Appl. Environ. Microbiol.">
        <title>Complete genome sequence of the marine, chemolithoautotrophic, ammonia-oxidizing bacterium Nitrosococcus oceani ATCC 19707.</title>
        <authorList>
            <person name="Klotz M.G."/>
            <person name="Arp D.J."/>
            <person name="Chain P.S.G."/>
            <person name="El-Sheikh A.F."/>
            <person name="Hauser L.J."/>
            <person name="Hommes N.G."/>
            <person name="Larimer F.W."/>
            <person name="Malfatti S.A."/>
            <person name="Norton J.M."/>
            <person name="Poret-Peterson A.T."/>
            <person name="Vergez L.M."/>
            <person name="Ward B.B."/>
        </authorList>
    </citation>
    <scope>NUCLEOTIDE SEQUENCE [LARGE SCALE GENOMIC DNA]</scope>
    <source>
        <strain>ATCC 19707 / BCRC 17464 / JCM 30415 / NCIMB 11848 / C-107</strain>
    </source>
</reference>
<proteinExistence type="inferred from homology"/>
<accession>Q3J6P9</accession>